<sequence>MRNDSPYTPLLNASHNNHRRRELLLLFSGLLLLASIIAFSAYIAQPHADADVSSSSSILSDEATRPTTLSRGVSSGVSEKSNTFLLSGNLVGEGGSFPWNNTMLSWQRTAFHFQPEKNWMNDPNGPLYYKGWYHFFYQYNPNGAVWGDIVWGHAVSRDLIHWLHLPLAMVADQWYDSNGVWTGSATILPDGQVIMLYTGSTNEFVQVQNLAYPADLNDPLLVDWIKYPSNPVLVPPPGILPKDFRDPTTAWLTTEGKWRITIGSKINKTGVALVYDTVDFKTYERKDMLLNAVPGTGMWECVDFFPVSMKSENGLDTSFTGDEVKHVMKVSLDDDRHDYYALGTYDEKKVKFIADDFENDVGIGLRYDYGIFYASKTFYDQKKDRRVLWGWIGESDSEYADVAKGWASVQSIPRIVKLDKKTGSNLLQWPVAEVESLRLRSDEFQNLKVKPGAVVSVDIETATQLDIVAEFEIDKEALEKTAQSNVEYECNTSGGASRRGALGPFGLYVLADNGLSEYTPVYFYVVKGINGKLHTSFCSDQSRSSLANDVHKQIYGSVVPVLEGEKLSLRILVDHSIVESFAQGGRTCITSRVYPTRAIYGAARLFLFNNAIETNVTASLKVWQMNSAFIRPYHPDQKRQTS</sequence>
<reference key="1">
    <citation type="journal article" date="1995" name="Plant Cell">
        <title>Seed coat-associated invertases of fava bean control both unloading and storage functions: cloning of cDNAs and cell type-specific expression.</title>
        <authorList>
            <person name="Weber H."/>
            <person name="Borisjuk L."/>
            <person name="Heim U."/>
            <person name="Buchner P."/>
            <person name="Wobus U."/>
        </authorList>
    </citation>
    <scope>NUCLEOTIDE SEQUENCE [MRNA]</scope>
    <source>
        <strain>cv. Fribo</strain>
        <tissue>Seed</tissue>
    </source>
</reference>
<gene>
    <name type="primary">VCINV</name>
</gene>
<dbReference type="EC" id="3.2.1.26"/>
<dbReference type="EMBL" id="Z49831">
    <property type="protein sequence ID" value="CAA89992.1"/>
    <property type="molecule type" value="mRNA"/>
</dbReference>
<dbReference type="PIR" id="S55521">
    <property type="entry name" value="S55521"/>
</dbReference>
<dbReference type="SMR" id="Q43857"/>
<dbReference type="CAZy" id="GH32">
    <property type="family name" value="Glycoside Hydrolase Family 32"/>
</dbReference>
<dbReference type="GlyCosmos" id="Q43857">
    <property type="glycosylation" value="4 sites, No reported glycans"/>
</dbReference>
<dbReference type="UniPathway" id="UPA00238"/>
<dbReference type="GO" id="GO:0016020">
    <property type="term" value="C:membrane"/>
    <property type="evidence" value="ECO:0007669"/>
    <property type="project" value="UniProtKB-SubCell"/>
</dbReference>
<dbReference type="GO" id="GO:0005775">
    <property type="term" value="C:vacuolar lumen"/>
    <property type="evidence" value="ECO:0007669"/>
    <property type="project" value="UniProtKB-SubCell"/>
</dbReference>
<dbReference type="GO" id="GO:0004564">
    <property type="term" value="F:beta-fructofuranosidase activity"/>
    <property type="evidence" value="ECO:0007669"/>
    <property type="project" value="UniProtKB-EC"/>
</dbReference>
<dbReference type="GO" id="GO:0005985">
    <property type="term" value="P:sucrose metabolic process"/>
    <property type="evidence" value="ECO:0007669"/>
    <property type="project" value="UniProtKB-UniPathway"/>
</dbReference>
<dbReference type="CDD" id="cd18624">
    <property type="entry name" value="GH32_Fruct1-like"/>
    <property type="match status" value="1"/>
</dbReference>
<dbReference type="FunFam" id="2.115.10.20:FF:000001">
    <property type="entry name" value="Beta-fructofuranosidase, insoluble isoenzyme CWINV1"/>
    <property type="match status" value="1"/>
</dbReference>
<dbReference type="FunFam" id="2.60.120.560:FF:000002">
    <property type="entry name" value="Beta-fructofuranosidase, insoluble isoenzyme CWINV1"/>
    <property type="match status" value="1"/>
</dbReference>
<dbReference type="Gene3D" id="2.60.120.560">
    <property type="entry name" value="Exo-inulinase, domain 1"/>
    <property type="match status" value="1"/>
</dbReference>
<dbReference type="Gene3D" id="2.115.10.20">
    <property type="entry name" value="Glycosyl hydrolase domain, family 43"/>
    <property type="match status" value="1"/>
</dbReference>
<dbReference type="InterPro" id="IPR021792">
    <property type="entry name" value="Beta-fructofuranosidase_N"/>
</dbReference>
<dbReference type="InterPro" id="IPR013320">
    <property type="entry name" value="ConA-like_dom_sf"/>
</dbReference>
<dbReference type="InterPro" id="IPR050551">
    <property type="entry name" value="Fructan_Metab_Enzymes"/>
</dbReference>
<dbReference type="InterPro" id="IPR001362">
    <property type="entry name" value="Glyco_hydro_32"/>
</dbReference>
<dbReference type="InterPro" id="IPR018053">
    <property type="entry name" value="Glyco_hydro_32_AS"/>
</dbReference>
<dbReference type="InterPro" id="IPR013189">
    <property type="entry name" value="Glyco_hydro_32_C"/>
</dbReference>
<dbReference type="InterPro" id="IPR013148">
    <property type="entry name" value="Glyco_hydro_32_N"/>
</dbReference>
<dbReference type="InterPro" id="IPR023296">
    <property type="entry name" value="Glyco_hydro_beta-prop_sf"/>
</dbReference>
<dbReference type="PANTHER" id="PTHR31953">
    <property type="entry name" value="BETA-FRUCTOFURANOSIDASE, INSOLUBLE ISOENZYME CWINV1-RELATED"/>
    <property type="match status" value="1"/>
</dbReference>
<dbReference type="Pfam" id="PF08244">
    <property type="entry name" value="Glyco_hydro_32C"/>
    <property type="match status" value="1"/>
</dbReference>
<dbReference type="Pfam" id="PF00251">
    <property type="entry name" value="Glyco_hydro_32N"/>
    <property type="match status" value="1"/>
</dbReference>
<dbReference type="Pfam" id="PF11837">
    <property type="entry name" value="INV_N"/>
    <property type="match status" value="1"/>
</dbReference>
<dbReference type="SMART" id="SM00640">
    <property type="entry name" value="Glyco_32"/>
    <property type="match status" value="1"/>
</dbReference>
<dbReference type="SUPFAM" id="SSF75005">
    <property type="entry name" value="Arabinanase/levansucrase/invertase"/>
    <property type="match status" value="1"/>
</dbReference>
<dbReference type="SUPFAM" id="SSF49899">
    <property type="entry name" value="Concanavalin A-like lectins/glucanases"/>
    <property type="match status" value="1"/>
</dbReference>
<dbReference type="PROSITE" id="PS00609">
    <property type="entry name" value="GLYCOSYL_HYDROL_F32"/>
    <property type="match status" value="1"/>
</dbReference>
<evidence type="ECO:0000250" key="1">
    <source>
        <dbReference type="UniProtKB" id="P29001"/>
    </source>
</evidence>
<evidence type="ECO:0000250" key="2">
    <source>
        <dbReference type="UniProtKB" id="P80065"/>
    </source>
</evidence>
<evidence type="ECO:0000250" key="3">
    <source>
        <dbReference type="UniProtKB" id="Q39041"/>
    </source>
</evidence>
<evidence type="ECO:0000250" key="4">
    <source>
        <dbReference type="UniProtKB" id="Q43866"/>
    </source>
</evidence>
<evidence type="ECO:0000255" key="5"/>
<evidence type="ECO:0000255" key="6">
    <source>
        <dbReference type="PROSITE-ProRule" id="PRU00498"/>
    </source>
</evidence>
<evidence type="ECO:0000255" key="7">
    <source>
        <dbReference type="PROSITE-ProRule" id="PRU10067"/>
    </source>
</evidence>
<evidence type="ECO:0000305" key="8"/>
<feature type="propeptide" id="PRO_0000033391" description="Removed in mature form" evidence="2">
    <location>
        <begin position="1"/>
        <end position="95"/>
    </location>
</feature>
<feature type="chain" id="PRO_0000033392" description="Acid beta-fructofuranosidase">
    <location>
        <begin position="96"/>
        <end position="642"/>
    </location>
</feature>
<feature type="topological domain" description="Cytoplasmic" evidence="8">
    <location>
        <begin position="1"/>
        <end position="22"/>
    </location>
</feature>
<feature type="transmembrane region" description="Helical; Signal-anchor for type II membrane protein" evidence="5">
    <location>
        <begin position="23"/>
        <end position="43"/>
    </location>
</feature>
<feature type="topological domain" description="Lumenal" evidence="8">
    <location>
        <begin position="44"/>
        <end position="642"/>
    </location>
</feature>
<feature type="active site" evidence="7">
    <location>
        <position position="122"/>
    </location>
</feature>
<feature type="binding site" evidence="4">
    <location>
        <begin position="119"/>
        <end position="122"/>
    </location>
    <ligand>
        <name>substrate</name>
    </ligand>
</feature>
<feature type="binding site" evidence="4">
    <location>
        <position position="138"/>
    </location>
    <ligand>
        <name>substrate</name>
    </ligand>
</feature>
<feature type="binding site" evidence="4">
    <location>
        <position position="146"/>
    </location>
    <ligand>
        <name>substrate</name>
    </ligand>
</feature>
<feature type="binding site" evidence="4">
    <location>
        <begin position="181"/>
        <end position="182"/>
    </location>
    <ligand>
        <name>substrate</name>
    </ligand>
</feature>
<feature type="binding site" evidence="4">
    <location>
        <begin position="245"/>
        <end position="246"/>
    </location>
    <ligand>
        <name>substrate</name>
    </ligand>
</feature>
<feature type="binding site" evidence="4">
    <location>
        <position position="300"/>
    </location>
    <ligand>
        <name>substrate</name>
    </ligand>
</feature>
<feature type="binding site" evidence="4">
    <location>
        <position position="333"/>
    </location>
    <ligand>
        <name>substrate</name>
    </ligand>
</feature>
<feature type="glycosylation site" description="N-linked (GlcNAc...) asparagine" evidence="6">
    <location>
        <position position="100"/>
    </location>
</feature>
<feature type="glycosylation site" description="N-linked (GlcNAc...) asparagine" evidence="6">
    <location>
        <position position="267"/>
    </location>
</feature>
<feature type="glycosylation site" description="N-linked (GlcNAc...) asparagine" evidence="6">
    <location>
        <position position="491"/>
    </location>
</feature>
<feature type="glycosylation site" description="N-linked (GlcNAc...) asparagine" evidence="6">
    <location>
        <position position="615"/>
    </location>
</feature>
<feature type="disulfide bond" evidence="4">
    <location>
        <begin position="490"/>
        <end position="538"/>
    </location>
</feature>
<name>INVA_VICFA</name>
<proteinExistence type="evidence at transcript level"/>
<keyword id="KW-1015">Disulfide bond</keyword>
<keyword id="KW-0325">Glycoprotein</keyword>
<keyword id="KW-0326">Glycosidase</keyword>
<keyword id="KW-0378">Hydrolase</keyword>
<keyword id="KW-0472">Membrane</keyword>
<keyword id="KW-0735">Signal-anchor</keyword>
<keyword id="KW-0812">Transmembrane</keyword>
<keyword id="KW-1133">Transmembrane helix</keyword>
<keyword id="KW-0926">Vacuole</keyword>
<keyword id="KW-0865">Zymogen</keyword>
<protein>
    <recommendedName>
        <fullName>Acid beta-fructofuranosidase</fullName>
        <ecNumber>3.2.1.26</ecNumber>
    </recommendedName>
    <alternativeName>
        <fullName>Acid invertase</fullName>
        <shortName>AI</shortName>
    </alternativeName>
    <alternativeName>
        <fullName>Acid sucrose hydrolase</fullName>
    </alternativeName>
    <alternativeName>
        <fullName>Vacuolar invertase</fullName>
    </alternativeName>
</protein>
<accession>Q43857</accession>
<comment type="catalytic activity">
    <reaction evidence="7">
        <text>Hydrolysis of terminal non-reducing beta-D-fructofuranoside residues in beta-D-fructofuranosides.</text>
        <dbReference type="EC" id="3.2.1.26"/>
    </reaction>
</comment>
<comment type="pathway">
    <text>Glycan biosynthesis; sucrose metabolism.</text>
</comment>
<comment type="subunit">
    <text evidence="1">May be present in two forms, a 70 kDa monomer and a heterodimer of the 30 kDa and 38 kDa subunits. The ratio of the levels of the two forms within cells appears to be regulated developmentally (By similarity).</text>
</comment>
<comment type="subcellular location">
    <subcellularLocation>
        <location evidence="5">Membrane</location>
        <topology evidence="5">Single-pass type II membrane protein</topology>
    </subcellularLocation>
    <subcellularLocation>
        <location evidence="8">Vacuole</location>
    </subcellularLocation>
    <subcellularLocation>
        <location evidence="3">Vacuole lumen</location>
    </subcellularLocation>
    <text evidence="3">May be released into the lumen of the vacuole from the tonoplast through a proteolytic processing.</text>
</comment>
<comment type="similarity">
    <text evidence="8">Belongs to the glycosyl hydrolase 32 family.</text>
</comment>
<organism>
    <name type="scientific">Vicia faba</name>
    <name type="common">Broad bean</name>
    <name type="synonym">Faba vulgaris</name>
    <dbReference type="NCBI Taxonomy" id="3906"/>
    <lineage>
        <taxon>Eukaryota</taxon>
        <taxon>Viridiplantae</taxon>
        <taxon>Streptophyta</taxon>
        <taxon>Embryophyta</taxon>
        <taxon>Tracheophyta</taxon>
        <taxon>Spermatophyta</taxon>
        <taxon>Magnoliopsida</taxon>
        <taxon>eudicotyledons</taxon>
        <taxon>Gunneridae</taxon>
        <taxon>Pentapetalae</taxon>
        <taxon>rosids</taxon>
        <taxon>fabids</taxon>
        <taxon>Fabales</taxon>
        <taxon>Fabaceae</taxon>
        <taxon>Papilionoideae</taxon>
        <taxon>50 kb inversion clade</taxon>
        <taxon>NPAAA clade</taxon>
        <taxon>Hologalegina</taxon>
        <taxon>IRL clade</taxon>
        <taxon>Fabeae</taxon>
        <taxon>Vicia</taxon>
    </lineage>
</organism>